<comment type="function">
    <text evidence="1">Class I viral fusion protein. Under the current model, the protein has at least 3 conformational states: pre-fusion native state, pre-hairpin intermediate state, and post-fusion hairpin state. During viral and plasma cell membrane fusion, the heptad repeat (HR) regions assume a trimer-of-hairpins structure, positioning the fusion peptide in close proximity to the C-terminal region of the ectodomain. The formation of this structure appears to drive apposition and subsequent fusion of viral and plasma cell membranes. Directs fusion of viral and cellular membranes leading to delivery of the nucleocapsid into the cytoplasm. This fusion is pH independent and occurs directly at the outer cell membrane. The trimer of F1-F2 (F protein) probably interacts with HN at the virion surface. Upon HN binding to its cellular receptor, the hydrophobic fusion peptide is unmasked and interacts with the cellular membrane, inducing the fusion between cell and virion membranes. Later in infection, F proteins expressed at the plasma membrane of infected cells could mediate fusion with adjacent cells to form syncytia, a cytopathic effect that could lead to tissue necrosis (By similarity).</text>
</comment>
<comment type="subunit">
    <text evidence="1">Homotrimer of disulfide-linked F1-F2.</text>
</comment>
<comment type="subcellular location">
    <subcellularLocation>
        <location evidence="1">Virion membrane</location>
        <topology evidence="1">Single-pass type I membrane protein</topology>
    </subcellularLocation>
    <subcellularLocation>
        <location evidence="1">Host cell membrane</location>
        <topology evidence="1">Single-pass membrane protein</topology>
    </subcellularLocation>
</comment>
<comment type="PTM">
    <text evidence="1">The inactive precursor F0 is glycosylated and proteolytically cleaved into F1 and F2 to be functionally active. The cleavage is mediated by cellular proteases during the transport and maturation of the polypeptide (By similarity).</text>
</comment>
<comment type="similarity">
    <text evidence="3">Belongs to the paramyxoviruses fusion glycoprotein family.</text>
</comment>
<dbReference type="EMBL" id="D00243">
    <property type="protein sequence ID" value="BAA00173.1"/>
    <property type="molecule type" value="Genomic_RNA"/>
</dbReference>
<dbReference type="EMBL" id="M24694">
    <property type="protein sequence ID" value="AAA46645.1"/>
    <property type="molecule type" value="Genomic_RNA"/>
</dbReference>
<dbReference type="PIR" id="A29823">
    <property type="entry name" value="VGNZU1"/>
</dbReference>
<dbReference type="SMR" id="P12570"/>
<dbReference type="GlyCosmos" id="P12570">
    <property type="glycosylation" value="5 sites, No reported glycans"/>
</dbReference>
<dbReference type="GO" id="GO:0020002">
    <property type="term" value="C:host cell plasma membrane"/>
    <property type="evidence" value="ECO:0007669"/>
    <property type="project" value="UniProtKB-SubCell"/>
</dbReference>
<dbReference type="GO" id="GO:0016020">
    <property type="term" value="C:membrane"/>
    <property type="evidence" value="ECO:0007669"/>
    <property type="project" value="UniProtKB-KW"/>
</dbReference>
<dbReference type="GO" id="GO:0019031">
    <property type="term" value="C:viral envelope"/>
    <property type="evidence" value="ECO:0007669"/>
    <property type="project" value="UniProtKB-KW"/>
</dbReference>
<dbReference type="GO" id="GO:0055036">
    <property type="term" value="C:virion membrane"/>
    <property type="evidence" value="ECO:0007669"/>
    <property type="project" value="UniProtKB-SubCell"/>
</dbReference>
<dbReference type="GO" id="GO:0019064">
    <property type="term" value="P:fusion of virus membrane with host plasma membrane"/>
    <property type="evidence" value="ECO:0007669"/>
    <property type="project" value="UniProtKB-KW"/>
</dbReference>
<dbReference type="GO" id="GO:0046718">
    <property type="term" value="P:symbiont entry into host cell"/>
    <property type="evidence" value="ECO:0007669"/>
    <property type="project" value="UniProtKB-KW"/>
</dbReference>
<dbReference type="Gene3D" id="1.10.287.2480">
    <property type="match status" value="1"/>
</dbReference>
<dbReference type="Gene3D" id="6.10.10.110">
    <property type="match status" value="1"/>
</dbReference>
<dbReference type="Gene3D" id="2.60.40.1690">
    <property type="entry name" value="Head and neck region of the ectodomain of NDV fusion glycoprotein"/>
    <property type="match status" value="1"/>
</dbReference>
<dbReference type="Gene3D" id="2.40.490.10">
    <property type="entry name" value="Newcastle disease virus like domain"/>
    <property type="match status" value="1"/>
</dbReference>
<dbReference type="InterPro" id="IPR000776">
    <property type="entry name" value="Fusion_F0_Paramyxovir"/>
</dbReference>
<dbReference type="Pfam" id="PF00523">
    <property type="entry name" value="Fusion_gly"/>
    <property type="match status" value="1"/>
</dbReference>
<dbReference type="SUPFAM" id="SSF69922">
    <property type="entry name" value="Head and neck region of the ectodomain of NDV fusion glycoprotein"/>
    <property type="match status" value="1"/>
</dbReference>
<dbReference type="SUPFAM" id="SSF58069">
    <property type="entry name" value="Virus ectodomain"/>
    <property type="match status" value="1"/>
</dbReference>
<keyword id="KW-0175">Coiled coil</keyword>
<keyword id="KW-1015">Disulfide bond</keyword>
<keyword id="KW-1169">Fusion of virus membrane with host cell membrane</keyword>
<keyword id="KW-1168">Fusion of virus membrane with host membrane</keyword>
<keyword id="KW-0325">Glycoprotein</keyword>
<keyword id="KW-1032">Host cell membrane</keyword>
<keyword id="KW-1043">Host membrane</keyword>
<keyword id="KW-0449">Lipoprotein</keyword>
<keyword id="KW-0472">Membrane</keyword>
<keyword id="KW-0564">Palmitate</keyword>
<keyword id="KW-0732">Signal</keyword>
<keyword id="KW-0812">Transmembrane</keyword>
<keyword id="KW-1133">Transmembrane helix</keyword>
<keyword id="KW-0261">Viral envelope protein</keyword>
<keyword id="KW-1162">Viral penetration into host cytoplasm</keyword>
<keyword id="KW-0946">Virion</keyword>
<keyword id="KW-1160">Virus entry into host cell</keyword>
<evidence type="ECO:0000250" key="1"/>
<evidence type="ECO:0000255" key="2"/>
<evidence type="ECO:0000305" key="3"/>
<gene>
    <name type="primary">F</name>
</gene>
<sequence length="553" mass="58683">MGSRSSTRIPVPLMLTVRVALALSCVCPTSSLDGRPLAAAGIVVTGDKAVNIYTSSQTGSIIVKLLPNMPKDKEACAKAPLEAYNRTLTTLLTPLGDSIRRIQESVTTSGGGKQGRLIGAIIGGAALGVATAAQITAASALILANQNAANILRLKESIAATNEAVHEVTDGLSQLAVAVGKMQQFVNDQFNKTAQELDCIKITQQVGVELNLYLTELTTVFGPQITSPALTQLTIQALYNLAGGNMDYLLTKLGVGNNQLSSLIGSGLITGNPILYDSQTQLLGIQVTLPSVGNLNNMRATYLETLSVSTTKGFASALVPKVVTQVGSVIEELDTSYCIETDLDLYCTRIVTFPMSPGIYSCLSGNTSACMYSKTEGALTTPYMTLKGSVIANCKMTTCRSADPPGIISQNYGEAVSLIDRQSCNVLSLDGITLRLSGEFDATYQKNISIQDSQVIVTGNLDISTELGNVNNSISNALDKLEESNSKLDKVNVKLTSTSALITYIVLTVISLVCGILSLVLACYLMYKQKAQQKTLLWLGNNTLDQMRATTKM</sequence>
<proteinExistence type="inferred from homology"/>
<accession>P12570</accession>
<organismHost>
    <name type="scientific">Gallus gallus</name>
    <name type="common">Chicken</name>
    <dbReference type="NCBI Taxonomy" id="9031"/>
</organismHost>
<feature type="signal peptide" evidence="2">
    <location>
        <begin position="1"/>
        <end position="31"/>
    </location>
</feature>
<feature type="chain" id="PRO_0000039324" description="Fusion glycoprotein F0">
    <location>
        <begin position="32"/>
        <end position="553"/>
    </location>
</feature>
<feature type="chain" id="PRO_0000039325" description="Fusion glycoprotein F2">
    <location>
        <begin position="32"/>
        <end position="116"/>
    </location>
</feature>
<feature type="chain" id="PRO_0000039326" description="Fusion glycoprotein F1">
    <location>
        <begin position="117"/>
        <end position="553"/>
    </location>
</feature>
<feature type="topological domain" description="Extracellular" evidence="1">
    <location>
        <begin position="32"/>
        <end position="500"/>
    </location>
</feature>
<feature type="transmembrane region" description="Helical" evidence="1">
    <location>
        <begin position="501"/>
        <end position="521"/>
    </location>
</feature>
<feature type="topological domain" description="Cytoplasmic" evidence="1">
    <location>
        <begin position="522"/>
        <end position="553"/>
    </location>
</feature>
<feature type="region of interest" description="Fusion peptide" evidence="1">
    <location>
        <begin position="117"/>
        <end position="141"/>
    </location>
</feature>
<feature type="coiled-coil region" evidence="2">
    <location>
        <begin position="142"/>
        <end position="170"/>
    </location>
</feature>
<feature type="coiled-coil region" evidence="2">
    <location>
        <begin position="466"/>
        <end position="491"/>
    </location>
</feature>
<feature type="site" description="Cleavage; by host" evidence="1">
    <location>
        <begin position="116"/>
        <end position="117"/>
    </location>
</feature>
<feature type="lipid moiety-binding region" description="S-palmitoyl cysteine; by host" evidence="2">
    <location>
        <position position="523"/>
    </location>
</feature>
<feature type="glycosylation site" description="N-linked (GlcNAc...) asparagine; by host" evidence="2">
    <location>
        <position position="85"/>
    </location>
</feature>
<feature type="glycosylation site" description="N-linked (GlcNAc...) asparagine; by host" evidence="2">
    <location>
        <position position="191"/>
    </location>
</feature>
<feature type="glycosylation site" description="N-linked (GlcNAc...) asparagine; by host" evidence="2">
    <location>
        <position position="366"/>
    </location>
</feature>
<feature type="glycosylation site" description="N-linked (GlcNAc...) asparagine; by host" evidence="2">
    <location>
        <position position="447"/>
    </location>
</feature>
<feature type="glycosylation site" description="N-linked (GlcNAc...) asparagine; by host" evidence="2">
    <location>
        <position position="471"/>
    </location>
</feature>
<feature type="disulfide bond" description="Interchain (between F2 and F1 chains)" evidence="1">
    <location>
        <begin position="76"/>
        <end position="199"/>
    </location>
</feature>
<feature type="disulfide bond" evidence="1">
    <location>
        <begin position="338"/>
        <end position="347"/>
    </location>
</feature>
<feature type="disulfide bond" evidence="1">
    <location>
        <begin position="362"/>
        <end position="370"/>
    </location>
</feature>
<feature type="disulfide bond" evidence="1">
    <location>
        <begin position="394"/>
        <end position="399"/>
    </location>
</feature>
<protein>
    <recommendedName>
        <fullName>Fusion glycoprotein F0</fullName>
    </recommendedName>
    <component>
        <recommendedName>
            <fullName>Fusion glycoprotein F2</fullName>
        </recommendedName>
    </component>
    <component>
        <recommendedName>
            <fullName>Fusion glycoprotein F1</fullName>
        </recommendedName>
    </component>
</protein>
<name>FUS_NDVU</name>
<organism>
    <name type="scientific">Newcastle disease virus (strain Chicken/Northern Ireland/Ulster/67)</name>
    <name type="common">NDV</name>
    <dbReference type="NCBI Taxonomy" id="11190"/>
    <lineage>
        <taxon>Viruses</taxon>
        <taxon>Riboviria</taxon>
        <taxon>Orthornavirae</taxon>
        <taxon>Negarnaviricota</taxon>
        <taxon>Haploviricotina</taxon>
        <taxon>Monjiviricetes</taxon>
        <taxon>Mononegavirales</taxon>
        <taxon>Paramyxoviridae</taxon>
        <taxon>Avulavirinae</taxon>
        <taxon>Orthoavulavirus</taxon>
        <taxon>Orthoavulavirus javaense</taxon>
        <taxon>Avian paramyxovirus 1</taxon>
    </lineage>
</organism>
<reference key="1">
    <citation type="journal article" date="1988" name="J. Gen. Virol.">
        <title>Nucleotide sequence of the fusion and haemagglutinin-neuraminidase glycoprotein genes of Newcastle disease virus, strain Ulster: molecular basis for variations in pathogenicity between strains.</title>
        <authorList>
            <person name="Millar N.S."/>
            <person name="Chambers P."/>
            <person name="Emmerson P.T."/>
        </authorList>
    </citation>
    <scope>NUCLEOTIDE SEQUENCE [GENOMIC RNA]</scope>
</reference>
<reference key="2">
    <citation type="journal article" date="1989" name="Virology">
        <title>Newcastle disease virus evolution. II. Lack of gene recombination in generating virulent and avirulent strains.</title>
        <authorList>
            <person name="Toyoda T."/>
            <person name="Sakaguchi T."/>
            <person name="Hirota H."/>
            <person name="Gotoh B."/>
            <person name="Kuma K."/>
            <person name="Miyata T."/>
            <person name="Nagai Y."/>
        </authorList>
    </citation>
    <scope>NUCLEOTIDE SEQUENCE [GENOMIC RNA]</scope>
</reference>